<gene>
    <name evidence="2 9" type="primary">cpfC</name>
    <name evidence="8" type="synonym">hemH</name>
    <name evidence="7" type="synonym">hemZ</name>
    <name type="ordered locus">Rv1485</name>
    <name type="ORF">MTCY277.06</name>
</gene>
<organism>
    <name type="scientific">Mycobacterium tuberculosis (strain ATCC 25618 / H37Rv)</name>
    <dbReference type="NCBI Taxonomy" id="83332"/>
    <lineage>
        <taxon>Bacteria</taxon>
        <taxon>Bacillati</taxon>
        <taxon>Actinomycetota</taxon>
        <taxon>Actinomycetes</taxon>
        <taxon>Mycobacteriales</taxon>
        <taxon>Mycobacteriaceae</taxon>
        <taxon>Mycobacterium</taxon>
        <taxon>Mycobacterium tuberculosis complex</taxon>
    </lineage>
</organism>
<evidence type="ECO:0000250" key="1">
    <source>
        <dbReference type="UniProtKB" id="P32396"/>
    </source>
</evidence>
<evidence type="ECO:0000255" key="2">
    <source>
        <dbReference type="HAMAP-Rule" id="MF_00323"/>
    </source>
</evidence>
<evidence type="ECO:0000269" key="3">
    <source>
    </source>
</evidence>
<evidence type="ECO:0000269" key="4">
    <source>
    </source>
</evidence>
<evidence type="ECO:0000269" key="5">
    <source>
    </source>
</evidence>
<evidence type="ECO:0000269" key="6">
    <source>
    </source>
</evidence>
<evidence type="ECO:0000303" key="7">
    <source>
    </source>
</evidence>
<evidence type="ECO:0000303" key="8">
    <source>
    </source>
</evidence>
<evidence type="ECO:0000303" key="9">
    <source>
    </source>
</evidence>
<evidence type="ECO:0000305" key="10"/>
<evidence type="ECO:0000305" key="11">
    <source>
    </source>
</evidence>
<evidence type="ECO:0000305" key="12">
    <source>
    </source>
</evidence>
<feature type="chain" id="PRO_0000175167" description="Coproporphyrin III ferrochelatase">
    <location>
        <begin position="1"/>
        <end position="344"/>
    </location>
</feature>
<feature type="binding site" evidence="2">
    <location>
        <position position="52"/>
    </location>
    <ligand>
        <name>Fe-coproporphyrin III</name>
        <dbReference type="ChEBI" id="CHEBI:68438"/>
    </ligand>
</feature>
<feature type="binding site" evidence="11">
    <location>
        <position position="113"/>
    </location>
    <ligand>
        <name>[2Fe-2S] cluster</name>
        <dbReference type="ChEBI" id="CHEBI:190135"/>
    </ligand>
</feature>
<feature type="binding site" evidence="2">
    <location>
        <position position="116"/>
    </location>
    <ligand>
        <name>Fe-coproporphyrin III</name>
        <dbReference type="ChEBI" id="CHEBI:68438"/>
    </ligand>
</feature>
<feature type="binding site" evidence="1 2">
    <location>
        <position position="172"/>
    </location>
    <ligand>
        <name>Fe(2+)</name>
        <dbReference type="ChEBI" id="CHEBI:29033"/>
    </ligand>
</feature>
<feature type="binding site" evidence="1 2">
    <location>
        <position position="255"/>
    </location>
    <ligand>
        <name>Fe(2+)</name>
        <dbReference type="ChEBI" id="CHEBI:29033"/>
    </ligand>
</feature>
<feature type="binding site" evidence="11">
    <location>
        <position position="316"/>
    </location>
    <ligand>
        <name>[2Fe-2S] cluster</name>
        <dbReference type="ChEBI" id="CHEBI:190135"/>
    </ligand>
</feature>
<feature type="binding site" evidence="11">
    <location>
        <position position="325"/>
    </location>
    <ligand>
        <name>[2Fe-2S] cluster</name>
        <dbReference type="ChEBI" id="CHEBI:190135"/>
    </ligand>
</feature>
<feature type="binding site" evidence="11">
    <location>
        <position position="330"/>
    </location>
    <ligand>
        <name>[2Fe-2S] cluster</name>
        <dbReference type="ChEBI" id="CHEBI:190135"/>
    </ligand>
</feature>
<proteinExistence type="evidence at protein level"/>
<accession>P9WNE3</accession>
<accession>L0T8E3</accession>
<accession>P0A576</accession>
<accession>P71765</accession>
<dbReference type="EC" id="4.99.1.9" evidence="2 6"/>
<dbReference type="EMBL" id="AL123456">
    <property type="protein sequence ID" value="CCP44245.1"/>
    <property type="molecule type" value="Genomic_DNA"/>
</dbReference>
<dbReference type="PIR" id="H70710">
    <property type="entry name" value="H70710"/>
</dbReference>
<dbReference type="RefSeq" id="NP_216001.1">
    <property type="nucleotide sequence ID" value="NC_000962.3"/>
</dbReference>
<dbReference type="RefSeq" id="WP_003407559.1">
    <property type="nucleotide sequence ID" value="NZ_NVQJ01000004.1"/>
</dbReference>
<dbReference type="SMR" id="P9WNE3"/>
<dbReference type="FunCoup" id="P9WNE3">
    <property type="interactions" value="556"/>
</dbReference>
<dbReference type="STRING" id="83332.Rv1485"/>
<dbReference type="PaxDb" id="83332-Rv1485"/>
<dbReference type="DNASU" id="886525"/>
<dbReference type="GeneID" id="886525"/>
<dbReference type="KEGG" id="mtu:Rv1485"/>
<dbReference type="KEGG" id="mtv:RVBD_1485"/>
<dbReference type="TubercuList" id="Rv1485"/>
<dbReference type="eggNOG" id="COG0276">
    <property type="taxonomic scope" value="Bacteria"/>
</dbReference>
<dbReference type="InParanoid" id="P9WNE3"/>
<dbReference type="OrthoDB" id="9776380at2"/>
<dbReference type="PhylomeDB" id="P9WNE3"/>
<dbReference type="UniPathway" id="UPA00252"/>
<dbReference type="Proteomes" id="UP000001584">
    <property type="component" value="Chromosome"/>
</dbReference>
<dbReference type="GO" id="GO:0005737">
    <property type="term" value="C:cytoplasm"/>
    <property type="evidence" value="ECO:0007669"/>
    <property type="project" value="UniProtKB-SubCell"/>
</dbReference>
<dbReference type="GO" id="GO:0005886">
    <property type="term" value="C:plasma membrane"/>
    <property type="evidence" value="ECO:0007005"/>
    <property type="project" value="MTBBASE"/>
</dbReference>
<dbReference type="GO" id="GO:0051537">
    <property type="term" value="F:2 iron, 2 sulfur cluster binding"/>
    <property type="evidence" value="ECO:0000314"/>
    <property type="project" value="MTBBASE"/>
</dbReference>
<dbReference type="GO" id="GO:0004325">
    <property type="term" value="F:ferrochelatase activity"/>
    <property type="evidence" value="ECO:0000318"/>
    <property type="project" value="GO_Central"/>
</dbReference>
<dbReference type="GO" id="GO:0046872">
    <property type="term" value="F:metal ion binding"/>
    <property type="evidence" value="ECO:0007669"/>
    <property type="project" value="UniProtKB-KW"/>
</dbReference>
<dbReference type="GO" id="GO:0006783">
    <property type="term" value="P:heme biosynthetic process"/>
    <property type="evidence" value="ECO:0000315"/>
    <property type="project" value="MTBBASE"/>
</dbReference>
<dbReference type="CDD" id="cd00419">
    <property type="entry name" value="Ferrochelatase_C"/>
    <property type="match status" value="1"/>
</dbReference>
<dbReference type="CDD" id="cd03411">
    <property type="entry name" value="Ferrochelatase_N"/>
    <property type="match status" value="1"/>
</dbReference>
<dbReference type="FunFam" id="3.40.50.1400:FF:000007">
    <property type="entry name" value="Ferrochelatase"/>
    <property type="match status" value="1"/>
</dbReference>
<dbReference type="Gene3D" id="3.40.50.1400">
    <property type="match status" value="2"/>
</dbReference>
<dbReference type="HAMAP" id="MF_00323">
    <property type="entry name" value="Ferrochelatase"/>
    <property type="match status" value="1"/>
</dbReference>
<dbReference type="InterPro" id="IPR001015">
    <property type="entry name" value="Ferrochelatase"/>
</dbReference>
<dbReference type="InterPro" id="IPR019772">
    <property type="entry name" value="Ferrochelatase_AS"/>
</dbReference>
<dbReference type="InterPro" id="IPR033644">
    <property type="entry name" value="Ferrochelatase_C"/>
</dbReference>
<dbReference type="InterPro" id="IPR033659">
    <property type="entry name" value="Ferrochelatase_N"/>
</dbReference>
<dbReference type="NCBIfam" id="TIGR00109">
    <property type="entry name" value="hemH"/>
    <property type="match status" value="1"/>
</dbReference>
<dbReference type="NCBIfam" id="NF000689">
    <property type="entry name" value="PRK00035.2-1"/>
    <property type="match status" value="1"/>
</dbReference>
<dbReference type="PANTHER" id="PTHR11108">
    <property type="entry name" value="FERROCHELATASE"/>
    <property type="match status" value="1"/>
</dbReference>
<dbReference type="PANTHER" id="PTHR11108:SF1">
    <property type="entry name" value="FERROCHELATASE, MITOCHONDRIAL"/>
    <property type="match status" value="1"/>
</dbReference>
<dbReference type="Pfam" id="PF00762">
    <property type="entry name" value="Ferrochelatase"/>
    <property type="match status" value="1"/>
</dbReference>
<dbReference type="SUPFAM" id="SSF53800">
    <property type="entry name" value="Chelatase"/>
    <property type="match status" value="1"/>
</dbReference>
<dbReference type="PROSITE" id="PS00534">
    <property type="entry name" value="FERROCHELATASE"/>
    <property type="match status" value="1"/>
</dbReference>
<name>CPFC_MYCTU</name>
<comment type="function">
    <text evidence="3 6">Involved in coproporphyrin-dependent heme b biosynthesis (PubMed:25646457). Catalyzes the insertion of ferrous iron into coproporphyrin III to form Fe-coproporphyrin III (PubMed:25646457). Has weaker activity with coproporphyrin I, protoporphyrin IX, deuteroporphyrin, 2,4 hydroxyethyl and 2,4 disulfonate (PubMed:11948160, PubMed:25646457).</text>
</comment>
<comment type="catalytic activity">
    <reaction evidence="2 6">
        <text>Fe-coproporphyrin III + 2 H(+) = coproporphyrin III + Fe(2+)</text>
        <dbReference type="Rhea" id="RHEA:49572"/>
        <dbReference type="ChEBI" id="CHEBI:15378"/>
        <dbReference type="ChEBI" id="CHEBI:29033"/>
        <dbReference type="ChEBI" id="CHEBI:68438"/>
        <dbReference type="ChEBI" id="CHEBI:131725"/>
        <dbReference type="EC" id="4.99.1.9"/>
    </reaction>
    <physiologicalReaction direction="right-to-left" evidence="2 6">
        <dbReference type="Rhea" id="RHEA:49574"/>
    </physiologicalReaction>
</comment>
<comment type="cofactor">
    <cofactor evidence="3">
        <name>[2Fe-2S] cluster</name>
        <dbReference type="ChEBI" id="CHEBI:190135"/>
    </cofactor>
    <text evidence="3">Binds 1 [2Fe-2S] cluster.</text>
</comment>
<comment type="biophysicochemical properties">
    <kinetics>
        <KM evidence="6">10.5 uM for coproporphyrin III</KM>
        <KM evidence="6">720 uM for protoporphyrin IX</KM>
        <text evidence="6">kcat is 1.8 min(-1) with coproporphyrin III as substrate. kcat is 0.8 min(-1) with protoporphyrin IX as substrate.</text>
    </kinetics>
</comment>
<comment type="pathway">
    <text evidence="2 4 6 12">Porphyrin-containing compound metabolism; protoheme biosynthesis.</text>
</comment>
<comment type="subunit">
    <text evidence="3">Monomer.</text>
</comment>
<comment type="subcellular location">
    <subcellularLocation>
        <location evidence="2">Cytoplasm</location>
    </subcellularLocation>
</comment>
<comment type="miscellaneous">
    <text evidence="5">Was identified as a high-confidence drug target.</text>
</comment>
<comment type="similarity">
    <text evidence="2 10">Belongs to the ferrochelatase family.</text>
</comment>
<sequence length="344" mass="37144">MQFDAVLLLSFGGPEGPEQVRPFLENVTRGRGVPAERLDAVAEHYLHFGGVSPINGINRTLIAELEAQQELPVYFGNRNWEPYVEDAVTAMRDNGVRRAAVFATSAWSGYSSCTQYVEDIARARRAAGRDAPELVKLRPYFDHPLFVEMFADAITAAAATVRGDARLVFTAHSIPTAADRRCGPNLYSRQVAYATRLVAAAAGYCDFDLAWQSRSGPPQVPWLEPDVTDQLTGLAGAGINAVIVCPIGFVADHIEVVWDLDHELRLQAEAAGIAYARASTPNADPRFARLARGLIDELRYGRIPARVSGPDPVPGCLSSINGQPCRPPHCVASVSPARPSAGSP</sequence>
<protein>
    <recommendedName>
        <fullName evidence="2 10">Coproporphyrin III ferrochelatase</fullName>
        <ecNumber evidence="2 6">4.99.1.9</ecNumber>
    </recommendedName>
</protein>
<keyword id="KW-0001">2Fe-2S</keyword>
<keyword id="KW-0963">Cytoplasm</keyword>
<keyword id="KW-0350">Heme biosynthesis</keyword>
<keyword id="KW-0408">Iron</keyword>
<keyword id="KW-0411">Iron-sulfur</keyword>
<keyword id="KW-0456">Lyase</keyword>
<keyword id="KW-0479">Metal-binding</keyword>
<keyword id="KW-0627">Porphyrin biosynthesis</keyword>
<keyword id="KW-1185">Reference proteome</keyword>
<reference key="1">
    <citation type="journal article" date="1998" name="Nature">
        <title>Deciphering the biology of Mycobacterium tuberculosis from the complete genome sequence.</title>
        <authorList>
            <person name="Cole S.T."/>
            <person name="Brosch R."/>
            <person name="Parkhill J."/>
            <person name="Garnier T."/>
            <person name="Churcher C.M."/>
            <person name="Harris D.E."/>
            <person name="Gordon S.V."/>
            <person name="Eiglmeier K."/>
            <person name="Gas S."/>
            <person name="Barry C.E. III"/>
            <person name="Tekaia F."/>
            <person name="Badcock K."/>
            <person name="Basham D."/>
            <person name="Brown D."/>
            <person name="Chillingworth T."/>
            <person name="Connor R."/>
            <person name="Davies R.M."/>
            <person name="Devlin K."/>
            <person name="Feltwell T."/>
            <person name="Gentles S."/>
            <person name="Hamlin N."/>
            <person name="Holroyd S."/>
            <person name="Hornsby T."/>
            <person name="Jagels K."/>
            <person name="Krogh A."/>
            <person name="McLean J."/>
            <person name="Moule S."/>
            <person name="Murphy L.D."/>
            <person name="Oliver S."/>
            <person name="Osborne J."/>
            <person name="Quail M.A."/>
            <person name="Rajandream M.A."/>
            <person name="Rogers J."/>
            <person name="Rutter S."/>
            <person name="Seeger K."/>
            <person name="Skelton S."/>
            <person name="Squares S."/>
            <person name="Squares R."/>
            <person name="Sulston J.E."/>
            <person name="Taylor K."/>
            <person name="Whitehead S."/>
            <person name="Barrell B.G."/>
        </authorList>
    </citation>
    <scope>NUCLEOTIDE SEQUENCE [LARGE SCALE GENOMIC DNA]</scope>
    <source>
        <strain>ATCC 25618 / H37Rv</strain>
    </source>
</reference>
<reference key="2">
    <citation type="journal article" date="2002" name="J. Bacteriol.">
        <title>Identification of [2Fe-2S] clusters in microbial ferrochelatases.</title>
        <authorList>
            <person name="Dailey T.A."/>
            <person name="Dailey H.A."/>
        </authorList>
    </citation>
    <scope>FUNCTION</scope>
    <scope>COFACTOR</scope>
    <scope>SUBUNIT</scope>
</reference>
<reference key="3">
    <citation type="journal article" date="2005" name="Tuberculosis">
        <title>HemZ is essential for heme biosynthesis in Mycobacterium tuberculosis.</title>
        <authorList>
            <person name="Parish T."/>
            <person name="Schaeffer M."/>
            <person name="Roberts G."/>
            <person name="Duncan K."/>
        </authorList>
    </citation>
    <scope>PATHWAY</scope>
</reference>
<reference key="4">
    <citation type="journal article" date="2008" name="BMC Syst. Biol.">
        <title>targetTB: a target identification pipeline for Mycobacterium tuberculosis through an interactome, reactome and genome-scale structural analysis.</title>
        <authorList>
            <person name="Raman K."/>
            <person name="Yeturu K."/>
            <person name="Chandra N."/>
        </authorList>
    </citation>
    <scope>IDENTIFICATION AS A DRUG TARGET [LARGE SCALE ANALYSIS]</scope>
</reference>
<reference key="5">
    <citation type="journal article" date="2011" name="Mol. Cell. Proteomics">
        <title>Proteogenomic analysis of Mycobacterium tuberculosis by high resolution mass spectrometry.</title>
        <authorList>
            <person name="Kelkar D.S."/>
            <person name="Kumar D."/>
            <person name="Kumar P."/>
            <person name="Balakrishnan L."/>
            <person name="Muthusamy B."/>
            <person name="Yadav A.K."/>
            <person name="Shrivastava P."/>
            <person name="Marimuthu A."/>
            <person name="Anand S."/>
            <person name="Sundaram H."/>
            <person name="Kingsbury R."/>
            <person name="Harsha H.C."/>
            <person name="Nair B."/>
            <person name="Prasad T.S."/>
            <person name="Chauhan D.S."/>
            <person name="Katoch K."/>
            <person name="Katoch V.M."/>
            <person name="Kumar P."/>
            <person name="Chaerkady R."/>
            <person name="Ramachandran S."/>
            <person name="Dash D."/>
            <person name="Pandey A."/>
        </authorList>
    </citation>
    <scope>IDENTIFICATION BY MASS SPECTROMETRY [LARGE SCALE ANALYSIS]</scope>
    <source>
        <strain>ATCC 25618 / H37Rv</strain>
    </source>
</reference>
<reference key="6">
    <citation type="journal article" date="2015" name="Proc. Natl. Acad. Sci. U.S.A.">
        <title>Noncanonical coproporphyrin-dependent bacterial heme biosynthesis pathway that does not use protoporphyrin.</title>
        <authorList>
            <person name="Dailey H.A."/>
            <person name="Gerdes S."/>
            <person name="Dailey T.A."/>
            <person name="Burch J.S."/>
            <person name="Phillips J.D."/>
        </authorList>
    </citation>
    <scope>FUNCTION</scope>
    <scope>CATALYTIC ACTIVITY</scope>
    <scope>BIOPHYSICOCHEMICAL PROPERTIES</scope>
    <scope>PATHWAY</scope>
</reference>
<reference key="7">
    <citation type="journal article" date="2015" name="Arch. Biochem. Biophys.">
        <title>HemQ: An iron-coproporphyrin oxidative decarboxylase for protoheme synthesis in Firmicutes and Actinobacteria.</title>
        <authorList>
            <person name="Dailey H.A."/>
            <person name="Gerdes S."/>
        </authorList>
    </citation>
    <scope>PATHWAY</scope>
    <scope>REVIEW</scope>
</reference>
<reference key="8">
    <citation type="journal article" date="2017" name="Microbiol. Mol. Biol. Rev.">
        <title>Prokaryotic heme biosynthesis: multiple pathways to a common essential product.</title>
        <authorList>
            <person name="Dailey H.A."/>
            <person name="Dailey T.A."/>
            <person name="Gerdes S."/>
            <person name="Jahn D."/>
            <person name="Jahn M."/>
            <person name="O'Brian M.R."/>
            <person name="Warren M.J."/>
        </authorList>
    </citation>
    <scope>NOMENCLATURE</scope>
    <scope>REVIEW</scope>
</reference>